<protein>
    <recommendedName>
        <fullName evidence="1">NADH-quinone oxidoreductase subunit I</fullName>
        <ecNumber evidence="1">7.1.1.-</ecNumber>
    </recommendedName>
    <alternativeName>
        <fullName evidence="1">NADH dehydrogenase I subunit I</fullName>
    </alternativeName>
    <alternativeName>
        <fullName evidence="1">NDH-1 subunit I</fullName>
    </alternativeName>
</protein>
<keyword id="KW-0004">4Fe-4S</keyword>
<keyword id="KW-0997">Cell inner membrane</keyword>
<keyword id="KW-1003">Cell membrane</keyword>
<keyword id="KW-0408">Iron</keyword>
<keyword id="KW-0411">Iron-sulfur</keyword>
<keyword id="KW-0472">Membrane</keyword>
<keyword id="KW-0479">Metal-binding</keyword>
<keyword id="KW-0520">NAD</keyword>
<keyword id="KW-0874">Quinone</keyword>
<keyword id="KW-0677">Repeat</keyword>
<keyword id="KW-1278">Translocase</keyword>
<keyword id="KW-0830">Ubiquinone</keyword>
<gene>
    <name evidence="1" type="primary">nuoI</name>
    <name type="ordered locus">Mext_1077</name>
</gene>
<evidence type="ECO:0000255" key="1">
    <source>
        <dbReference type="HAMAP-Rule" id="MF_01351"/>
    </source>
</evidence>
<organism>
    <name type="scientific">Methylorubrum extorquens (strain PA1)</name>
    <name type="common">Methylobacterium extorquens</name>
    <dbReference type="NCBI Taxonomy" id="419610"/>
    <lineage>
        <taxon>Bacteria</taxon>
        <taxon>Pseudomonadati</taxon>
        <taxon>Pseudomonadota</taxon>
        <taxon>Alphaproteobacteria</taxon>
        <taxon>Hyphomicrobiales</taxon>
        <taxon>Methylobacteriaceae</taxon>
        <taxon>Methylorubrum</taxon>
    </lineage>
</organism>
<reference key="1">
    <citation type="submission" date="2007-12" db="EMBL/GenBank/DDBJ databases">
        <title>Complete sequence of Methylobacterium extorquens PA1.</title>
        <authorList>
            <consortium name="US DOE Joint Genome Institute"/>
            <person name="Copeland A."/>
            <person name="Lucas S."/>
            <person name="Lapidus A."/>
            <person name="Barry K."/>
            <person name="Glavina del Rio T."/>
            <person name="Dalin E."/>
            <person name="Tice H."/>
            <person name="Pitluck S."/>
            <person name="Saunders E."/>
            <person name="Brettin T."/>
            <person name="Bruce D."/>
            <person name="Detter J.C."/>
            <person name="Han C."/>
            <person name="Schmutz J."/>
            <person name="Larimer F."/>
            <person name="Land M."/>
            <person name="Hauser L."/>
            <person name="Kyrpides N."/>
            <person name="Kim E."/>
            <person name="Marx C."/>
            <person name="Richardson P."/>
        </authorList>
    </citation>
    <scope>NUCLEOTIDE SEQUENCE [LARGE SCALE GENOMIC DNA]</scope>
    <source>
        <strain>PA1</strain>
    </source>
</reference>
<dbReference type="EC" id="7.1.1.-" evidence="1"/>
<dbReference type="EMBL" id="CP000908">
    <property type="protein sequence ID" value="ABY29481.1"/>
    <property type="molecule type" value="Genomic_DNA"/>
</dbReference>
<dbReference type="RefSeq" id="WP_003598186.1">
    <property type="nucleotide sequence ID" value="NC_010172.1"/>
</dbReference>
<dbReference type="SMR" id="A9W1M5"/>
<dbReference type="GeneID" id="72988650"/>
<dbReference type="KEGG" id="mex:Mext_1077"/>
<dbReference type="eggNOG" id="COG1143">
    <property type="taxonomic scope" value="Bacteria"/>
</dbReference>
<dbReference type="HOGENOM" id="CLU_067218_5_1_5"/>
<dbReference type="BioCyc" id="MEXT419610:MEXT_RS05405-MONOMER"/>
<dbReference type="GO" id="GO:0005886">
    <property type="term" value="C:plasma membrane"/>
    <property type="evidence" value="ECO:0007669"/>
    <property type="project" value="UniProtKB-SubCell"/>
</dbReference>
<dbReference type="GO" id="GO:0051539">
    <property type="term" value="F:4 iron, 4 sulfur cluster binding"/>
    <property type="evidence" value="ECO:0007669"/>
    <property type="project" value="UniProtKB-KW"/>
</dbReference>
<dbReference type="GO" id="GO:0005506">
    <property type="term" value="F:iron ion binding"/>
    <property type="evidence" value="ECO:0007669"/>
    <property type="project" value="UniProtKB-UniRule"/>
</dbReference>
<dbReference type="GO" id="GO:0050136">
    <property type="term" value="F:NADH:ubiquinone reductase (non-electrogenic) activity"/>
    <property type="evidence" value="ECO:0007669"/>
    <property type="project" value="UniProtKB-UniRule"/>
</dbReference>
<dbReference type="GO" id="GO:0048038">
    <property type="term" value="F:quinone binding"/>
    <property type="evidence" value="ECO:0007669"/>
    <property type="project" value="UniProtKB-KW"/>
</dbReference>
<dbReference type="GO" id="GO:0009060">
    <property type="term" value="P:aerobic respiration"/>
    <property type="evidence" value="ECO:0007669"/>
    <property type="project" value="TreeGrafter"/>
</dbReference>
<dbReference type="FunFam" id="3.30.70.3270:FF:000001">
    <property type="entry name" value="NADH-quinone oxidoreductase subunit I 1"/>
    <property type="match status" value="1"/>
</dbReference>
<dbReference type="Gene3D" id="3.30.70.3270">
    <property type="match status" value="1"/>
</dbReference>
<dbReference type="HAMAP" id="MF_01351">
    <property type="entry name" value="NDH1_NuoI"/>
    <property type="match status" value="1"/>
</dbReference>
<dbReference type="InterPro" id="IPR017896">
    <property type="entry name" value="4Fe4S_Fe-S-bd"/>
</dbReference>
<dbReference type="InterPro" id="IPR017900">
    <property type="entry name" value="4Fe4S_Fe_S_CS"/>
</dbReference>
<dbReference type="InterPro" id="IPR010226">
    <property type="entry name" value="NADH_quinone_OxRdtase_chainI"/>
</dbReference>
<dbReference type="NCBIfam" id="TIGR01971">
    <property type="entry name" value="NuoI"/>
    <property type="match status" value="1"/>
</dbReference>
<dbReference type="NCBIfam" id="NF004538">
    <property type="entry name" value="PRK05888.1-4"/>
    <property type="match status" value="1"/>
</dbReference>
<dbReference type="NCBIfam" id="NF004539">
    <property type="entry name" value="PRK05888.1-5"/>
    <property type="match status" value="1"/>
</dbReference>
<dbReference type="PANTHER" id="PTHR10849:SF20">
    <property type="entry name" value="NADH DEHYDROGENASE [UBIQUINONE] IRON-SULFUR PROTEIN 8, MITOCHONDRIAL"/>
    <property type="match status" value="1"/>
</dbReference>
<dbReference type="PANTHER" id="PTHR10849">
    <property type="entry name" value="NADH DEHYDROGENASE UBIQUINONE IRON-SULFUR PROTEIN 8, MITOCHONDRIAL"/>
    <property type="match status" value="1"/>
</dbReference>
<dbReference type="Pfam" id="PF12838">
    <property type="entry name" value="Fer4_7"/>
    <property type="match status" value="1"/>
</dbReference>
<dbReference type="SUPFAM" id="SSF54862">
    <property type="entry name" value="4Fe-4S ferredoxins"/>
    <property type="match status" value="1"/>
</dbReference>
<dbReference type="PROSITE" id="PS00198">
    <property type="entry name" value="4FE4S_FER_1"/>
    <property type="match status" value="2"/>
</dbReference>
<dbReference type="PROSITE" id="PS51379">
    <property type="entry name" value="4FE4S_FER_2"/>
    <property type="match status" value="2"/>
</dbReference>
<name>NUOI_METEP</name>
<proteinExistence type="inferred from homology"/>
<comment type="function">
    <text evidence="1">NDH-1 shuttles electrons from NADH, via FMN and iron-sulfur (Fe-S) centers, to quinones in the respiratory chain. The immediate electron acceptor for the enzyme in this species is believed to be ubiquinone. Couples the redox reaction to proton translocation (for every two electrons transferred, four hydrogen ions are translocated across the cytoplasmic membrane), and thus conserves the redox energy in a proton gradient.</text>
</comment>
<comment type="catalytic activity">
    <reaction evidence="1">
        <text>a quinone + NADH + 5 H(+)(in) = a quinol + NAD(+) + 4 H(+)(out)</text>
        <dbReference type="Rhea" id="RHEA:57888"/>
        <dbReference type="ChEBI" id="CHEBI:15378"/>
        <dbReference type="ChEBI" id="CHEBI:24646"/>
        <dbReference type="ChEBI" id="CHEBI:57540"/>
        <dbReference type="ChEBI" id="CHEBI:57945"/>
        <dbReference type="ChEBI" id="CHEBI:132124"/>
    </reaction>
</comment>
<comment type="cofactor">
    <cofactor evidence="1">
        <name>[4Fe-4S] cluster</name>
        <dbReference type="ChEBI" id="CHEBI:49883"/>
    </cofactor>
    <text evidence="1">Binds 2 [4Fe-4S] clusters per subunit.</text>
</comment>
<comment type="subunit">
    <text evidence="1">NDH-1 is composed of 14 different subunits. Subunits NuoA, H, J, K, L, M, N constitute the membrane sector of the complex.</text>
</comment>
<comment type="subcellular location">
    <subcellularLocation>
        <location evidence="1">Cell inner membrane</location>
        <topology evidence="1">Peripheral membrane protein</topology>
    </subcellularLocation>
</comment>
<comment type="similarity">
    <text evidence="1">Belongs to the complex I 23 kDa subunit family.</text>
</comment>
<feature type="chain" id="PRO_1000143651" description="NADH-quinone oxidoreductase subunit I">
    <location>
        <begin position="1"/>
        <end position="162"/>
    </location>
</feature>
<feature type="domain" description="4Fe-4S ferredoxin-type 1" evidence="1">
    <location>
        <begin position="52"/>
        <end position="82"/>
    </location>
</feature>
<feature type="domain" description="4Fe-4S ferredoxin-type 2" evidence="1">
    <location>
        <begin position="93"/>
        <end position="122"/>
    </location>
</feature>
<feature type="binding site" evidence="1">
    <location>
        <position position="62"/>
    </location>
    <ligand>
        <name>[4Fe-4S] cluster</name>
        <dbReference type="ChEBI" id="CHEBI:49883"/>
        <label>1</label>
    </ligand>
</feature>
<feature type="binding site" evidence="1">
    <location>
        <position position="65"/>
    </location>
    <ligand>
        <name>[4Fe-4S] cluster</name>
        <dbReference type="ChEBI" id="CHEBI:49883"/>
        <label>1</label>
    </ligand>
</feature>
<feature type="binding site" evidence="1">
    <location>
        <position position="68"/>
    </location>
    <ligand>
        <name>[4Fe-4S] cluster</name>
        <dbReference type="ChEBI" id="CHEBI:49883"/>
        <label>1</label>
    </ligand>
</feature>
<feature type="binding site" evidence="1">
    <location>
        <position position="72"/>
    </location>
    <ligand>
        <name>[4Fe-4S] cluster</name>
        <dbReference type="ChEBI" id="CHEBI:49883"/>
        <label>2</label>
    </ligand>
</feature>
<feature type="binding site" evidence="1">
    <location>
        <position position="102"/>
    </location>
    <ligand>
        <name>[4Fe-4S] cluster</name>
        <dbReference type="ChEBI" id="CHEBI:49883"/>
        <label>2</label>
    </ligand>
</feature>
<feature type="binding site" evidence="1">
    <location>
        <position position="105"/>
    </location>
    <ligand>
        <name>[4Fe-4S] cluster</name>
        <dbReference type="ChEBI" id="CHEBI:49883"/>
        <label>2</label>
    </ligand>
</feature>
<feature type="binding site" evidence="1">
    <location>
        <position position="108"/>
    </location>
    <ligand>
        <name>[4Fe-4S] cluster</name>
        <dbReference type="ChEBI" id="CHEBI:49883"/>
        <label>2</label>
    </ligand>
</feature>
<feature type="binding site" evidence="1">
    <location>
        <position position="112"/>
    </location>
    <ligand>
        <name>[4Fe-4S] cluster</name>
        <dbReference type="ChEBI" id="CHEBI:49883"/>
        <label>1</label>
    </ligand>
</feature>
<sequence length="162" mass="18749">MKLDQVARSLLLKEFVSGFVLAMKYFFKPKATINYPFEMGHRGPRFRGEHALRRYPNGEERCIACKLCEAICPAQAITIEAGPRRNDGTRRTTRYDIDMVKCIYCGMCQEACPVDAIVEGPNFEFSVETREELLYDKQKLLENGDRWEREIARNIAVDAPYR</sequence>
<accession>A9W1M5</accession>